<accession>P66252</accession>
<accession>Q99QT1</accession>
<keyword id="KW-0687">Ribonucleoprotein</keyword>
<keyword id="KW-0689">Ribosomal protein</keyword>
<dbReference type="EMBL" id="BA000017">
    <property type="protein sequence ID" value="BAB58876.1"/>
    <property type="molecule type" value="Genomic_DNA"/>
</dbReference>
<dbReference type="RefSeq" id="WP_000240855.1">
    <property type="nucleotide sequence ID" value="NC_002758.2"/>
</dbReference>
<dbReference type="SMR" id="P66252"/>
<dbReference type="GeneID" id="98347025"/>
<dbReference type="KEGG" id="sav:SAV2714"/>
<dbReference type="HOGENOM" id="CLU_129938_2_0_9"/>
<dbReference type="PhylomeDB" id="P66252"/>
<dbReference type="Proteomes" id="UP000002481">
    <property type="component" value="Chromosome"/>
</dbReference>
<dbReference type="GO" id="GO:1990904">
    <property type="term" value="C:ribonucleoprotein complex"/>
    <property type="evidence" value="ECO:0007669"/>
    <property type="project" value="UniProtKB-KW"/>
</dbReference>
<dbReference type="GO" id="GO:0005840">
    <property type="term" value="C:ribosome"/>
    <property type="evidence" value="ECO:0007669"/>
    <property type="project" value="UniProtKB-KW"/>
</dbReference>
<dbReference type="GO" id="GO:0003735">
    <property type="term" value="F:structural constituent of ribosome"/>
    <property type="evidence" value="ECO:0007669"/>
    <property type="project" value="InterPro"/>
</dbReference>
<dbReference type="GO" id="GO:0006412">
    <property type="term" value="P:translation"/>
    <property type="evidence" value="ECO:0007669"/>
    <property type="project" value="UniProtKB-UniRule"/>
</dbReference>
<dbReference type="FunFam" id="1.10.287.3980:FF:000001">
    <property type="entry name" value="Mitochondrial ribosomal protein L34"/>
    <property type="match status" value="1"/>
</dbReference>
<dbReference type="Gene3D" id="1.10.287.3980">
    <property type="match status" value="1"/>
</dbReference>
<dbReference type="HAMAP" id="MF_00391">
    <property type="entry name" value="Ribosomal_bL34"/>
    <property type="match status" value="1"/>
</dbReference>
<dbReference type="InterPro" id="IPR000271">
    <property type="entry name" value="Ribosomal_bL34"/>
</dbReference>
<dbReference type="InterPro" id="IPR020939">
    <property type="entry name" value="Ribosomal_bL34_CS"/>
</dbReference>
<dbReference type="NCBIfam" id="TIGR01030">
    <property type="entry name" value="rpmH_bact"/>
    <property type="match status" value="1"/>
</dbReference>
<dbReference type="PANTHER" id="PTHR14503:SF4">
    <property type="entry name" value="LARGE RIBOSOMAL SUBUNIT PROTEIN BL34M"/>
    <property type="match status" value="1"/>
</dbReference>
<dbReference type="PANTHER" id="PTHR14503">
    <property type="entry name" value="MITOCHONDRIAL RIBOSOMAL PROTEIN 34 FAMILY MEMBER"/>
    <property type="match status" value="1"/>
</dbReference>
<dbReference type="Pfam" id="PF00468">
    <property type="entry name" value="Ribosomal_L34"/>
    <property type="match status" value="1"/>
</dbReference>
<dbReference type="PROSITE" id="PS00784">
    <property type="entry name" value="RIBOSOMAL_L34"/>
    <property type="match status" value="1"/>
</dbReference>
<name>RL34_STAAM</name>
<evidence type="ECO:0000255" key="1">
    <source>
        <dbReference type="HAMAP-Rule" id="MF_00391"/>
    </source>
</evidence>
<evidence type="ECO:0000256" key="2">
    <source>
        <dbReference type="SAM" id="MobiDB-lite"/>
    </source>
</evidence>
<evidence type="ECO:0000305" key="3"/>
<organism>
    <name type="scientific">Staphylococcus aureus (strain Mu50 / ATCC 700699)</name>
    <dbReference type="NCBI Taxonomy" id="158878"/>
    <lineage>
        <taxon>Bacteria</taxon>
        <taxon>Bacillati</taxon>
        <taxon>Bacillota</taxon>
        <taxon>Bacilli</taxon>
        <taxon>Bacillales</taxon>
        <taxon>Staphylococcaceae</taxon>
        <taxon>Staphylococcus</taxon>
    </lineage>
</organism>
<proteinExistence type="inferred from homology"/>
<protein>
    <recommendedName>
        <fullName evidence="1">Large ribosomal subunit protein bL34</fullName>
    </recommendedName>
    <alternativeName>
        <fullName evidence="3">50S ribosomal protein L34</fullName>
    </alternativeName>
</protein>
<gene>
    <name evidence="1" type="primary">rpmH</name>
    <name type="ordered locus">SAV2714</name>
</gene>
<sequence length="45" mass="5434">MVKRTYQPNKRKHSKVHGFRKRMSTKNGRKVLARRRRKGRKVLSA</sequence>
<reference key="1">
    <citation type="journal article" date="2001" name="Lancet">
        <title>Whole genome sequencing of meticillin-resistant Staphylococcus aureus.</title>
        <authorList>
            <person name="Kuroda M."/>
            <person name="Ohta T."/>
            <person name="Uchiyama I."/>
            <person name="Baba T."/>
            <person name="Yuzawa H."/>
            <person name="Kobayashi I."/>
            <person name="Cui L."/>
            <person name="Oguchi A."/>
            <person name="Aoki K."/>
            <person name="Nagai Y."/>
            <person name="Lian J.-Q."/>
            <person name="Ito T."/>
            <person name="Kanamori M."/>
            <person name="Matsumaru H."/>
            <person name="Maruyama A."/>
            <person name="Murakami H."/>
            <person name="Hosoyama A."/>
            <person name="Mizutani-Ui Y."/>
            <person name="Takahashi N.K."/>
            <person name="Sawano T."/>
            <person name="Inoue R."/>
            <person name="Kaito C."/>
            <person name="Sekimizu K."/>
            <person name="Hirakawa H."/>
            <person name="Kuhara S."/>
            <person name="Goto S."/>
            <person name="Yabuzaki J."/>
            <person name="Kanehisa M."/>
            <person name="Yamashita A."/>
            <person name="Oshima K."/>
            <person name="Furuya K."/>
            <person name="Yoshino C."/>
            <person name="Shiba T."/>
            <person name="Hattori M."/>
            <person name="Ogasawara N."/>
            <person name="Hayashi H."/>
            <person name="Hiramatsu K."/>
        </authorList>
    </citation>
    <scope>NUCLEOTIDE SEQUENCE [LARGE SCALE GENOMIC DNA]</scope>
    <source>
        <strain>Mu50 / ATCC 700699</strain>
    </source>
</reference>
<feature type="chain" id="PRO_0000187461" description="Large ribosomal subunit protein bL34">
    <location>
        <begin position="1"/>
        <end position="45"/>
    </location>
</feature>
<feature type="region of interest" description="Disordered" evidence="2">
    <location>
        <begin position="1"/>
        <end position="45"/>
    </location>
</feature>
<comment type="similarity">
    <text evidence="1">Belongs to the bacterial ribosomal protein bL34 family.</text>
</comment>